<comment type="function">
    <text evidence="4">Mediates visceral muscle contractile activity (myotropic activity).</text>
</comment>
<comment type="subcellular location">
    <subcellularLocation>
        <location evidence="4">Secreted</location>
    </subcellularLocation>
</comment>
<comment type="mass spectrometry" mass="1102.6" method="MALDI" evidence="2"/>
<comment type="similarity">
    <text evidence="1">Belongs to the periviscerokinin family.</text>
</comment>
<protein>
    <recommendedName>
        <fullName>Periviscerokinin-2.2</fullName>
    </recommendedName>
    <alternativeName>
        <fullName>Lem-PVK-2-like peptide</fullName>
    </alternativeName>
    <alternativeName>
        <fullName>Periviscerokinin-2</fullName>
        <shortName>PerAu-PVK-2</shortName>
    </alternativeName>
</protein>
<sequence length="11" mass="1103">GSSGLISMPRV</sequence>
<feature type="peptide" id="PRO_0000044271" description="Periviscerokinin-2.2">
    <location>
        <begin position="1"/>
        <end position="11"/>
    </location>
</feature>
<feature type="modified residue" description="Valine amide" evidence="2 3">
    <location>
        <position position="11"/>
    </location>
</feature>
<organism>
    <name type="scientific">Periplaneta australasiae</name>
    <name type="common">Australian cockroach</name>
    <name type="synonym">Blatta australasiae</name>
    <dbReference type="NCBI Taxonomy" id="36975"/>
    <lineage>
        <taxon>Eukaryota</taxon>
        <taxon>Metazoa</taxon>
        <taxon>Ecdysozoa</taxon>
        <taxon>Arthropoda</taxon>
        <taxon>Hexapoda</taxon>
        <taxon>Insecta</taxon>
        <taxon>Pterygota</taxon>
        <taxon>Neoptera</taxon>
        <taxon>Polyneoptera</taxon>
        <taxon>Dictyoptera</taxon>
        <taxon>Blattodea</taxon>
        <taxon>Blattoidea</taxon>
        <taxon>Blattidae</taxon>
        <taxon>Blattinae</taxon>
        <taxon>Periplaneta</taxon>
    </lineage>
</organism>
<name>PVK22_PERAU</name>
<reference evidence="4" key="1">
    <citation type="journal article" date="2005" name="Peptides">
        <title>Peptidomics of neurohemal organs from species of the cockroach family Blattidae: how do neuropeptides of closely related species differ?</title>
        <authorList>
            <person name="Predel R."/>
            <person name="Gaede G."/>
        </authorList>
    </citation>
    <scope>PROTEIN SEQUENCE</scope>
    <scope>MASS SPECTROMETRY</scope>
    <scope>AMIDATION AT VAL-11</scope>
    <source>
        <tissue evidence="2">Abdominal perisympathetic organs</tissue>
    </source>
</reference>
<reference key="2">
    <citation type="journal article" date="2009" name="BMC Evol. Biol.">
        <title>A proteomic approach for studying insect phylogeny: CAPA peptides of ancient insect taxa (Dictyoptera, Blattoptera) as a test case.</title>
        <authorList>
            <person name="Roth S."/>
            <person name="Fromm B."/>
            <person name="Gaede G."/>
            <person name="Predel R."/>
        </authorList>
    </citation>
    <scope>PROTEIN SEQUENCE</scope>
    <scope>AMIDATION AT VAL-11</scope>
    <source>
        <tissue>Abdominal perisympathetic organs</tissue>
    </source>
</reference>
<proteinExistence type="evidence at protein level"/>
<keyword id="KW-0027">Amidation</keyword>
<keyword id="KW-0903">Direct protein sequencing</keyword>
<keyword id="KW-0527">Neuropeptide</keyword>
<keyword id="KW-0964">Secreted</keyword>
<dbReference type="GO" id="GO:0005576">
    <property type="term" value="C:extracellular region"/>
    <property type="evidence" value="ECO:0007669"/>
    <property type="project" value="UniProtKB-SubCell"/>
</dbReference>
<dbReference type="GO" id="GO:0007218">
    <property type="term" value="P:neuropeptide signaling pathway"/>
    <property type="evidence" value="ECO:0007669"/>
    <property type="project" value="UniProtKB-KW"/>
</dbReference>
<dbReference type="InterPro" id="IPR013231">
    <property type="entry name" value="Periviscerokinin"/>
</dbReference>
<dbReference type="Pfam" id="PF08259">
    <property type="entry name" value="Periviscerokin"/>
    <property type="match status" value="1"/>
</dbReference>
<evidence type="ECO:0000255" key="1"/>
<evidence type="ECO:0000269" key="2">
    <source>
    </source>
</evidence>
<evidence type="ECO:0000269" key="3">
    <source>
    </source>
</evidence>
<evidence type="ECO:0000305" key="4"/>
<accession>P84424</accession>